<sequence>MVTRDAGMADDAATGSTRTYQVRTYGCQMNVHDSERLAGLLEAAGYQRAADEADVGDADVVVFNTCAVRENADNRLYGNLSHLAPRKRNNPDMQIAVGGCLAQKDKHTVLSKAPWVDIVFGTHNLGSLPTLLDRARHNKVAQVEIVEALQHFPSSLPSARESDYAAWVSISVGCNNSCTFCIVPSLRGKEVDRSPADILAEVEALVADGVLEVTLLGQNVNAYGVSFADPALARNRGSFAELLRSCGSIDGLERVRFTSPHPAEFTYDVIEAMAQTPNVCPSLHMPLQSGSDRVLRAMRRSYRVERYLGIIGQVRAAMPHAAITTDLIVGFPGETEEDFAATLDVVRQVRFTAAFTFQYSKRPGTPAAELGGQLPKAVVQERYERLVELQEQICMEENRVLIGRIVELLVTTGEGRKDARTARRTGRARDGRLVHFALDTPWEAQVRPGDIITVMVTEAAPHHLIADAGILTHRRTRAGDAHAARQCPRSIGLGQIPLGMPSVGQHSASIGSAGCAR</sequence>
<keyword id="KW-0004">4Fe-4S</keyword>
<keyword id="KW-0963">Cytoplasm</keyword>
<keyword id="KW-0408">Iron</keyword>
<keyword id="KW-0411">Iron-sulfur</keyword>
<keyword id="KW-0479">Metal-binding</keyword>
<keyword id="KW-1185">Reference proteome</keyword>
<keyword id="KW-0949">S-adenosyl-L-methionine</keyword>
<keyword id="KW-0808">Transferase</keyword>
<keyword id="KW-0819">tRNA processing</keyword>
<comment type="function">
    <text evidence="1">Catalyzes the methylthiolation of N6-(dimethylallyl)adenosine (i(6)A), leading to the formation of 2-methylthio-N6-(dimethylallyl)adenosine (ms(2)i(6)A) at position 37 in tRNAs that read codons beginning with uridine.</text>
</comment>
<comment type="catalytic activity">
    <reaction evidence="1">
        <text>N(6)-dimethylallyladenosine(37) in tRNA + (sulfur carrier)-SH + AH2 + 2 S-adenosyl-L-methionine = 2-methylsulfanyl-N(6)-dimethylallyladenosine(37) in tRNA + (sulfur carrier)-H + 5'-deoxyadenosine + L-methionine + A + S-adenosyl-L-homocysteine + 2 H(+)</text>
        <dbReference type="Rhea" id="RHEA:37067"/>
        <dbReference type="Rhea" id="RHEA-COMP:10375"/>
        <dbReference type="Rhea" id="RHEA-COMP:10376"/>
        <dbReference type="Rhea" id="RHEA-COMP:14737"/>
        <dbReference type="Rhea" id="RHEA-COMP:14739"/>
        <dbReference type="ChEBI" id="CHEBI:13193"/>
        <dbReference type="ChEBI" id="CHEBI:15378"/>
        <dbReference type="ChEBI" id="CHEBI:17319"/>
        <dbReference type="ChEBI" id="CHEBI:17499"/>
        <dbReference type="ChEBI" id="CHEBI:29917"/>
        <dbReference type="ChEBI" id="CHEBI:57844"/>
        <dbReference type="ChEBI" id="CHEBI:57856"/>
        <dbReference type="ChEBI" id="CHEBI:59789"/>
        <dbReference type="ChEBI" id="CHEBI:64428"/>
        <dbReference type="ChEBI" id="CHEBI:74415"/>
        <dbReference type="ChEBI" id="CHEBI:74417"/>
        <dbReference type="EC" id="2.8.4.3"/>
    </reaction>
</comment>
<comment type="cofactor">
    <cofactor evidence="1">
        <name>[4Fe-4S] cluster</name>
        <dbReference type="ChEBI" id="CHEBI:49883"/>
    </cofactor>
    <text evidence="1">Binds 2 [4Fe-4S] clusters. One cluster is coordinated with 3 cysteines and an exchangeable S-adenosyl-L-methionine.</text>
</comment>
<comment type="subunit">
    <text evidence="1">Monomer.</text>
</comment>
<comment type="subcellular location">
    <subcellularLocation>
        <location evidence="1">Cytoplasm</location>
    </subcellularLocation>
</comment>
<comment type="similarity">
    <text evidence="1">Belongs to the methylthiotransferase family. MiaB subfamily.</text>
</comment>
<comment type="sequence caution" evidence="3">
    <conflict type="erroneous initiation">
        <sequence resource="EMBL-CDS" id="AAA17273"/>
    </conflict>
</comment>
<accession>Q49842</accession>
<reference key="1">
    <citation type="submission" date="1994-03" db="EMBL/GenBank/DDBJ databases">
        <authorList>
            <person name="Smith D.R."/>
            <person name="Robison K."/>
        </authorList>
    </citation>
    <scope>NUCLEOTIDE SEQUENCE [GENOMIC DNA]</scope>
</reference>
<reference key="2">
    <citation type="journal article" date="2001" name="Nature">
        <title>Massive gene decay in the leprosy bacillus.</title>
        <authorList>
            <person name="Cole S.T."/>
            <person name="Eiglmeier K."/>
            <person name="Parkhill J."/>
            <person name="James K.D."/>
            <person name="Thomson N.R."/>
            <person name="Wheeler P.R."/>
            <person name="Honore N."/>
            <person name="Garnier T."/>
            <person name="Churcher C.M."/>
            <person name="Harris D.E."/>
            <person name="Mungall K.L."/>
            <person name="Basham D."/>
            <person name="Brown D."/>
            <person name="Chillingworth T."/>
            <person name="Connor R."/>
            <person name="Davies R.M."/>
            <person name="Devlin K."/>
            <person name="Duthoy S."/>
            <person name="Feltwell T."/>
            <person name="Fraser A."/>
            <person name="Hamlin N."/>
            <person name="Holroyd S."/>
            <person name="Hornsby T."/>
            <person name="Jagels K."/>
            <person name="Lacroix C."/>
            <person name="Maclean J."/>
            <person name="Moule S."/>
            <person name="Murphy L.D."/>
            <person name="Oliver K."/>
            <person name="Quail M.A."/>
            <person name="Rajandream M.A."/>
            <person name="Rutherford K.M."/>
            <person name="Rutter S."/>
            <person name="Seeger K."/>
            <person name="Simon S."/>
            <person name="Simmonds M."/>
            <person name="Skelton J."/>
            <person name="Squares R."/>
            <person name="Squares S."/>
            <person name="Stevens K."/>
            <person name="Taylor K."/>
            <person name="Whitehead S."/>
            <person name="Woodward J.R."/>
            <person name="Barrell B.G."/>
        </authorList>
    </citation>
    <scope>NUCLEOTIDE SEQUENCE [LARGE SCALE GENOMIC DNA]</scope>
    <source>
        <strain>TN</strain>
    </source>
</reference>
<dbReference type="EC" id="2.8.4.3" evidence="1"/>
<dbReference type="EMBL" id="U00019">
    <property type="protein sequence ID" value="AAA17273.1"/>
    <property type="status" value="ALT_INIT"/>
    <property type="molecule type" value="Genomic_DNA"/>
</dbReference>
<dbReference type="EMBL" id="AL583920">
    <property type="protein sequence ID" value="CAC31370.1"/>
    <property type="molecule type" value="Genomic_DNA"/>
</dbReference>
<dbReference type="PIR" id="G87032">
    <property type="entry name" value="G87032"/>
</dbReference>
<dbReference type="PIR" id="S72937">
    <property type="entry name" value="S72937"/>
</dbReference>
<dbReference type="RefSeq" id="NP_301734.1">
    <property type="nucleotide sequence ID" value="NC_002677.1"/>
</dbReference>
<dbReference type="SMR" id="Q49842"/>
<dbReference type="STRING" id="272631.gene:17574815"/>
<dbReference type="KEGG" id="mle:ML0989"/>
<dbReference type="PATRIC" id="fig|272631.5.peg.1791"/>
<dbReference type="Leproma" id="ML0989"/>
<dbReference type="eggNOG" id="COG0621">
    <property type="taxonomic scope" value="Bacteria"/>
</dbReference>
<dbReference type="HOGENOM" id="CLU_018697_2_2_11"/>
<dbReference type="OrthoDB" id="9805215at2"/>
<dbReference type="Proteomes" id="UP000000806">
    <property type="component" value="Chromosome"/>
</dbReference>
<dbReference type="GO" id="GO:0005829">
    <property type="term" value="C:cytosol"/>
    <property type="evidence" value="ECO:0007669"/>
    <property type="project" value="TreeGrafter"/>
</dbReference>
<dbReference type="GO" id="GO:0051539">
    <property type="term" value="F:4 iron, 4 sulfur cluster binding"/>
    <property type="evidence" value="ECO:0007669"/>
    <property type="project" value="UniProtKB-UniRule"/>
</dbReference>
<dbReference type="GO" id="GO:0046872">
    <property type="term" value="F:metal ion binding"/>
    <property type="evidence" value="ECO:0007669"/>
    <property type="project" value="UniProtKB-KW"/>
</dbReference>
<dbReference type="GO" id="GO:0035597">
    <property type="term" value="F:N6-isopentenyladenosine methylthiotransferase activity"/>
    <property type="evidence" value="ECO:0007669"/>
    <property type="project" value="TreeGrafter"/>
</dbReference>
<dbReference type="CDD" id="cd01335">
    <property type="entry name" value="Radical_SAM"/>
    <property type="match status" value="1"/>
</dbReference>
<dbReference type="FunFam" id="3.40.50.12160:FF:000003">
    <property type="entry name" value="CDK5 regulatory subunit-associated protein 1"/>
    <property type="match status" value="1"/>
</dbReference>
<dbReference type="FunFam" id="3.80.30.20:FF:000001">
    <property type="entry name" value="tRNA-2-methylthio-N(6)-dimethylallyladenosine synthase 2"/>
    <property type="match status" value="1"/>
</dbReference>
<dbReference type="Gene3D" id="3.40.50.12160">
    <property type="entry name" value="Methylthiotransferase, N-terminal domain"/>
    <property type="match status" value="1"/>
</dbReference>
<dbReference type="Gene3D" id="3.80.30.20">
    <property type="entry name" value="tm_1862 like domain"/>
    <property type="match status" value="1"/>
</dbReference>
<dbReference type="HAMAP" id="MF_01864">
    <property type="entry name" value="tRNA_metthiotr_MiaB"/>
    <property type="match status" value="1"/>
</dbReference>
<dbReference type="InterPro" id="IPR006638">
    <property type="entry name" value="Elp3/MiaA/NifB-like_rSAM"/>
</dbReference>
<dbReference type="InterPro" id="IPR005839">
    <property type="entry name" value="Methylthiotransferase"/>
</dbReference>
<dbReference type="InterPro" id="IPR020612">
    <property type="entry name" value="Methylthiotransferase_CS"/>
</dbReference>
<dbReference type="InterPro" id="IPR013848">
    <property type="entry name" value="Methylthiotransferase_N"/>
</dbReference>
<dbReference type="InterPro" id="IPR038135">
    <property type="entry name" value="Methylthiotransferase_N_sf"/>
</dbReference>
<dbReference type="InterPro" id="IPR006463">
    <property type="entry name" value="MiaB_methiolase"/>
</dbReference>
<dbReference type="InterPro" id="IPR007197">
    <property type="entry name" value="rSAM"/>
</dbReference>
<dbReference type="InterPro" id="IPR023404">
    <property type="entry name" value="rSAM_horseshoe"/>
</dbReference>
<dbReference type="InterPro" id="IPR002792">
    <property type="entry name" value="TRAM_dom"/>
</dbReference>
<dbReference type="NCBIfam" id="TIGR01574">
    <property type="entry name" value="miaB-methiolase"/>
    <property type="match status" value="1"/>
</dbReference>
<dbReference type="NCBIfam" id="TIGR00089">
    <property type="entry name" value="MiaB/RimO family radical SAM methylthiotransferase"/>
    <property type="match status" value="1"/>
</dbReference>
<dbReference type="PANTHER" id="PTHR43020">
    <property type="entry name" value="CDK5 REGULATORY SUBUNIT-ASSOCIATED PROTEIN 1"/>
    <property type="match status" value="1"/>
</dbReference>
<dbReference type="PANTHER" id="PTHR43020:SF2">
    <property type="entry name" value="MITOCHONDRIAL TRNA METHYLTHIOTRANSFERASE CDK5RAP1"/>
    <property type="match status" value="1"/>
</dbReference>
<dbReference type="Pfam" id="PF04055">
    <property type="entry name" value="Radical_SAM"/>
    <property type="match status" value="1"/>
</dbReference>
<dbReference type="Pfam" id="PF00919">
    <property type="entry name" value="UPF0004"/>
    <property type="match status" value="1"/>
</dbReference>
<dbReference type="SFLD" id="SFLDF00273">
    <property type="entry name" value="(dimethylallyl)adenosine_tRNA"/>
    <property type="match status" value="1"/>
</dbReference>
<dbReference type="SFLD" id="SFLDG01082">
    <property type="entry name" value="B12-binding_domain_containing"/>
    <property type="match status" value="1"/>
</dbReference>
<dbReference type="SFLD" id="SFLDS00029">
    <property type="entry name" value="Radical_SAM"/>
    <property type="match status" value="1"/>
</dbReference>
<dbReference type="SMART" id="SM00729">
    <property type="entry name" value="Elp3"/>
    <property type="match status" value="1"/>
</dbReference>
<dbReference type="SUPFAM" id="SSF102114">
    <property type="entry name" value="Radical SAM enzymes"/>
    <property type="match status" value="1"/>
</dbReference>
<dbReference type="PROSITE" id="PS51449">
    <property type="entry name" value="MTTASE_N"/>
    <property type="match status" value="1"/>
</dbReference>
<dbReference type="PROSITE" id="PS01278">
    <property type="entry name" value="MTTASE_RADICAL"/>
    <property type="match status" value="1"/>
</dbReference>
<dbReference type="PROSITE" id="PS51918">
    <property type="entry name" value="RADICAL_SAM"/>
    <property type="match status" value="1"/>
</dbReference>
<dbReference type="PROSITE" id="PS50926">
    <property type="entry name" value="TRAM"/>
    <property type="match status" value="1"/>
</dbReference>
<gene>
    <name evidence="1" type="primary">miaB</name>
    <name type="ordered locus">ML0989</name>
    <name type="ORF">B2235_C2_195</name>
</gene>
<evidence type="ECO:0000255" key="1">
    <source>
        <dbReference type="HAMAP-Rule" id="MF_01864"/>
    </source>
</evidence>
<evidence type="ECO:0000255" key="2">
    <source>
        <dbReference type="PROSITE-ProRule" id="PRU01266"/>
    </source>
</evidence>
<evidence type="ECO:0000305" key="3"/>
<protein>
    <recommendedName>
        <fullName evidence="1">tRNA-2-methylthio-N(6)-dimethylallyladenosine synthase</fullName>
        <ecNumber evidence="1">2.8.4.3</ecNumber>
    </recommendedName>
    <alternativeName>
        <fullName evidence="1">(Dimethylallyl)adenosine tRNA methylthiotransferase MiaB</fullName>
    </alternativeName>
    <alternativeName>
        <fullName evidence="1">tRNA-i(6)A37 methylthiotransferase</fullName>
    </alternativeName>
</protein>
<name>MIAB_MYCLE</name>
<feature type="chain" id="PRO_0000141744" description="tRNA-2-methylthio-N(6)-dimethylallyladenosine synthase">
    <location>
        <begin position="1"/>
        <end position="517"/>
    </location>
</feature>
<feature type="domain" description="MTTase N-terminal" evidence="1">
    <location>
        <begin position="18"/>
        <end position="137"/>
    </location>
</feature>
<feature type="domain" description="Radical SAM core" evidence="2">
    <location>
        <begin position="160"/>
        <end position="397"/>
    </location>
</feature>
<feature type="domain" description="TRAM" evidence="1">
    <location>
        <begin position="399"/>
        <end position="470"/>
    </location>
</feature>
<feature type="binding site" evidence="1">
    <location>
        <position position="27"/>
    </location>
    <ligand>
        <name>[4Fe-4S] cluster</name>
        <dbReference type="ChEBI" id="CHEBI:49883"/>
        <label>1</label>
    </ligand>
</feature>
<feature type="binding site" evidence="1">
    <location>
        <position position="66"/>
    </location>
    <ligand>
        <name>[4Fe-4S] cluster</name>
        <dbReference type="ChEBI" id="CHEBI:49883"/>
        <label>1</label>
    </ligand>
</feature>
<feature type="binding site" evidence="1">
    <location>
        <position position="100"/>
    </location>
    <ligand>
        <name>[4Fe-4S] cluster</name>
        <dbReference type="ChEBI" id="CHEBI:49883"/>
        <label>1</label>
    </ligand>
</feature>
<feature type="binding site" evidence="1">
    <location>
        <position position="174"/>
    </location>
    <ligand>
        <name>[4Fe-4S] cluster</name>
        <dbReference type="ChEBI" id="CHEBI:49883"/>
        <label>2</label>
        <note>4Fe-4S-S-AdoMet</note>
    </ligand>
</feature>
<feature type="binding site" evidence="1">
    <location>
        <position position="178"/>
    </location>
    <ligand>
        <name>[4Fe-4S] cluster</name>
        <dbReference type="ChEBI" id="CHEBI:49883"/>
        <label>2</label>
        <note>4Fe-4S-S-AdoMet</note>
    </ligand>
</feature>
<feature type="binding site" evidence="1">
    <location>
        <position position="181"/>
    </location>
    <ligand>
        <name>[4Fe-4S] cluster</name>
        <dbReference type="ChEBI" id="CHEBI:49883"/>
        <label>2</label>
        <note>4Fe-4S-S-AdoMet</note>
    </ligand>
</feature>
<organism>
    <name type="scientific">Mycobacterium leprae (strain TN)</name>
    <dbReference type="NCBI Taxonomy" id="272631"/>
    <lineage>
        <taxon>Bacteria</taxon>
        <taxon>Bacillati</taxon>
        <taxon>Actinomycetota</taxon>
        <taxon>Actinomycetes</taxon>
        <taxon>Mycobacteriales</taxon>
        <taxon>Mycobacteriaceae</taxon>
        <taxon>Mycobacterium</taxon>
    </lineage>
</organism>
<proteinExistence type="inferred from homology"/>